<gene>
    <name evidence="1" type="primary">nqrD</name>
    <name type="ordered locus">Sden_0985</name>
</gene>
<feature type="chain" id="PRO_1000060167" description="Na(+)-translocating NADH-quinone reductase subunit D">
    <location>
        <begin position="1"/>
        <end position="210"/>
    </location>
</feature>
<feature type="transmembrane region" description="Helical" evidence="1">
    <location>
        <begin position="14"/>
        <end position="34"/>
    </location>
</feature>
<feature type="transmembrane region" description="Helical" evidence="1">
    <location>
        <begin position="42"/>
        <end position="62"/>
    </location>
</feature>
<feature type="transmembrane region" description="Helical" evidence="1">
    <location>
        <begin position="72"/>
        <end position="92"/>
    </location>
</feature>
<feature type="transmembrane region" description="Helical" evidence="1">
    <location>
        <begin position="96"/>
        <end position="116"/>
    </location>
</feature>
<feature type="transmembrane region" description="Helical" evidence="1">
    <location>
        <begin position="131"/>
        <end position="151"/>
    </location>
</feature>
<feature type="transmembrane region" description="Helical" evidence="1">
    <location>
        <begin position="178"/>
        <end position="198"/>
    </location>
</feature>
<evidence type="ECO:0000255" key="1">
    <source>
        <dbReference type="HAMAP-Rule" id="MF_00428"/>
    </source>
</evidence>
<sequence>MADVKELKQVLTGPIINNNPIALQILGVCSALAVTSKMETALVMSLALTVVTAFSNLFISLIRNHIPSSVRIIVQMTIIASLVIVVDQVLQAYAYEIAKQLSVFVGLIITNCIVMGRAEAYAMKTPPMMSFMDGIGNGLGYGAILLGVGFFRELFGNGSLFGIEILSKISDGGWYQPNGLLLLPPSAFFLIGGLIWVIRTYKPEQVEAKG</sequence>
<organism>
    <name type="scientific">Shewanella denitrificans (strain OS217 / ATCC BAA-1090 / DSM 15013)</name>
    <dbReference type="NCBI Taxonomy" id="318161"/>
    <lineage>
        <taxon>Bacteria</taxon>
        <taxon>Pseudomonadati</taxon>
        <taxon>Pseudomonadota</taxon>
        <taxon>Gammaproteobacteria</taxon>
        <taxon>Alteromonadales</taxon>
        <taxon>Shewanellaceae</taxon>
        <taxon>Shewanella</taxon>
    </lineage>
</organism>
<accession>Q12QK3</accession>
<reference key="1">
    <citation type="submission" date="2006-03" db="EMBL/GenBank/DDBJ databases">
        <title>Complete sequence of Shewanella denitrificans OS217.</title>
        <authorList>
            <consortium name="US DOE Joint Genome Institute"/>
            <person name="Copeland A."/>
            <person name="Lucas S."/>
            <person name="Lapidus A."/>
            <person name="Barry K."/>
            <person name="Detter J.C."/>
            <person name="Glavina del Rio T."/>
            <person name="Hammon N."/>
            <person name="Israni S."/>
            <person name="Dalin E."/>
            <person name="Tice H."/>
            <person name="Pitluck S."/>
            <person name="Brettin T."/>
            <person name="Bruce D."/>
            <person name="Han C."/>
            <person name="Tapia R."/>
            <person name="Gilna P."/>
            <person name="Kiss H."/>
            <person name="Schmutz J."/>
            <person name="Larimer F."/>
            <person name="Land M."/>
            <person name="Hauser L."/>
            <person name="Kyrpides N."/>
            <person name="Lykidis A."/>
            <person name="Richardson P."/>
        </authorList>
    </citation>
    <scope>NUCLEOTIDE SEQUENCE [LARGE SCALE GENOMIC DNA]</scope>
    <source>
        <strain>OS217 / ATCC BAA-1090 / DSM 15013</strain>
    </source>
</reference>
<protein>
    <recommendedName>
        <fullName evidence="1">Na(+)-translocating NADH-quinone reductase subunit D</fullName>
        <shortName evidence="1">Na(+)-NQR subunit D</shortName>
        <shortName evidence="1">Na(+)-translocating NQR subunit D</shortName>
        <ecNumber evidence="1">7.2.1.1</ecNumber>
    </recommendedName>
    <alternativeName>
        <fullName evidence="1">NQR complex subunit D</fullName>
    </alternativeName>
    <alternativeName>
        <fullName evidence="1">NQR-1 subunit D</fullName>
    </alternativeName>
</protein>
<proteinExistence type="inferred from homology"/>
<comment type="function">
    <text evidence="1">NQR complex catalyzes the reduction of ubiquinone-1 to ubiquinol by two successive reactions, coupled with the transport of Na(+) ions from the cytoplasm to the periplasm. NqrA to NqrE are probably involved in the second step, the conversion of ubisemiquinone to ubiquinol.</text>
</comment>
<comment type="catalytic activity">
    <reaction evidence="1">
        <text>a ubiquinone + n Na(+)(in) + NADH + H(+) = a ubiquinol + n Na(+)(out) + NAD(+)</text>
        <dbReference type="Rhea" id="RHEA:47748"/>
        <dbReference type="Rhea" id="RHEA-COMP:9565"/>
        <dbReference type="Rhea" id="RHEA-COMP:9566"/>
        <dbReference type="ChEBI" id="CHEBI:15378"/>
        <dbReference type="ChEBI" id="CHEBI:16389"/>
        <dbReference type="ChEBI" id="CHEBI:17976"/>
        <dbReference type="ChEBI" id="CHEBI:29101"/>
        <dbReference type="ChEBI" id="CHEBI:57540"/>
        <dbReference type="ChEBI" id="CHEBI:57945"/>
        <dbReference type="EC" id="7.2.1.1"/>
    </reaction>
</comment>
<comment type="subunit">
    <text evidence="1">Composed of six subunits; NqrA, NqrB, NqrC, NqrD, NqrE and NqrF.</text>
</comment>
<comment type="subcellular location">
    <subcellularLocation>
        <location evidence="1">Cell inner membrane</location>
        <topology evidence="1">Multi-pass membrane protein</topology>
    </subcellularLocation>
</comment>
<comment type="similarity">
    <text evidence="1">Belongs to the NqrDE/RnfAE family.</text>
</comment>
<keyword id="KW-0997">Cell inner membrane</keyword>
<keyword id="KW-1003">Cell membrane</keyword>
<keyword id="KW-0406">Ion transport</keyword>
<keyword id="KW-0472">Membrane</keyword>
<keyword id="KW-0520">NAD</keyword>
<keyword id="KW-1185">Reference proteome</keyword>
<keyword id="KW-0915">Sodium</keyword>
<keyword id="KW-0739">Sodium transport</keyword>
<keyword id="KW-1278">Translocase</keyword>
<keyword id="KW-0812">Transmembrane</keyword>
<keyword id="KW-1133">Transmembrane helix</keyword>
<keyword id="KW-0813">Transport</keyword>
<keyword id="KW-0830">Ubiquinone</keyword>
<dbReference type="EC" id="7.2.1.1" evidence="1"/>
<dbReference type="EMBL" id="CP000302">
    <property type="protein sequence ID" value="ABE54273.1"/>
    <property type="molecule type" value="Genomic_DNA"/>
</dbReference>
<dbReference type="RefSeq" id="WP_011495437.1">
    <property type="nucleotide sequence ID" value="NC_007954.1"/>
</dbReference>
<dbReference type="SMR" id="Q12QK3"/>
<dbReference type="STRING" id="318161.Sden_0985"/>
<dbReference type="KEGG" id="sdn:Sden_0985"/>
<dbReference type="eggNOG" id="COG1347">
    <property type="taxonomic scope" value="Bacteria"/>
</dbReference>
<dbReference type="HOGENOM" id="CLU_046659_1_1_6"/>
<dbReference type="OrthoDB" id="9782945at2"/>
<dbReference type="Proteomes" id="UP000001982">
    <property type="component" value="Chromosome"/>
</dbReference>
<dbReference type="GO" id="GO:0005886">
    <property type="term" value="C:plasma membrane"/>
    <property type="evidence" value="ECO:0007669"/>
    <property type="project" value="UniProtKB-SubCell"/>
</dbReference>
<dbReference type="GO" id="GO:0016655">
    <property type="term" value="F:oxidoreductase activity, acting on NAD(P)H, quinone or similar compound as acceptor"/>
    <property type="evidence" value="ECO:0007669"/>
    <property type="project" value="UniProtKB-UniRule"/>
</dbReference>
<dbReference type="GO" id="GO:0006814">
    <property type="term" value="P:sodium ion transport"/>
    <property type="evidence" value="ECO:0007669"/>
    <property type="project" value="UniProtKB-UniRule"/>
</dbReference>
<dbReference type="HAMAP" id="MF_00428">
    <property type="entry name" value="NqrD"/>
    <property type="match status" value="1"/>
</dbReference>
<dbReference type="InterPro" id="IPR011292">
    <property type="entry name" value="NqrD"/>
</dbReference>
<dbReference type="InterPro" id="IPR003667">
    <property type="entry name" value="NqrDE/RnfAE"/>
</dbReference>
<dbReference type="NCBIfam" id="TIGR01939">
    <property type="entry name" value="nqrD"/>
    <property type="match status" value="1"/>
</dbReference>
<dbReference type="NCBIfam" id="NF006777">
    <property type="entry name" value="PRK09292.1"/>
    <property type="match status" value="1"/>
</dbReference>
<dbReference type="NCBIfam" id="NF009070">
    <property type="entry name" value="PRK12405.1"/>
    <property type="match status" value="1"/>
</dbReference>
<dbReference type="PANTHER" id="PTHR30586">
    <property type="entry name" value="ELECTRON TRANSPORT COMPLEX PROTEIN RNFE"/>
    <property type="match status" value="1"/>
</dbReference>
<dbReference type="PANTHER" id="PTHR30586:SF1">
    <property type="entry name" value="NA(+)-TRANSLOCATING NADH-QUINONE REDUCTASE SUBUNIT D"/>
    <property type="match status" value="1"/>
</dbReference>
<dbReference type="Pfam" id="PF02508">
    <property type="entry name" value="Rnf-Nqr"/>
    <property type="match status" value="1"/>
</dbReference>
<dbReference type="PIRSF" id="PIRSF006102">
    <property type="entry name" value="NQR_DE"/>
    <property type="match status" value="1"/>
</dbReference>
<name>NQRD_SHEDO</name>